<protein>
    <recommendedName>
        <fullName evidence="8">T cell receptor alpha variable 7</fullName>
    </recommendedName>
</protein>
<evidence type="ECO:0000255" key="1"/>
<evidence type="ECO:0000255" key="2">
    <source>
        <dbReference type="PROSITE-ProRule" id="PRU00114"/>
    </source>
</evidence>
<evidence type="ECO:0000303" key="3">
    <source>
    </source>
</evidence>
<evidence type="ECO:0000303" key="4">
    <source>
    </source>
</evidence>
<evidence type="ECO:0000303" key="5">
    <source>
    </source>
</evidence>
<evidence type="ECO:0000303" key="6">
    <source>
    </source>
</evidence>
<evidence type="ECO:0000303" key="7">
    <source>
    </source>
</evidence>
<evidence type="ECO:0000303" key="8">
    <source ref="2"/>
</evidence>
<evidence type="ECO:0000305" key="9"/>
<gene>
    <name evidence="8" type="primary">TRAV7</name>
</gene>
<sequence length="112" mass="12598">MEKMRRPVLIIFCLCLGWANGENQVEHSPHFLGPQQGDVASMSCTYSVSRFNNLQWYRQNTGMGPKHLLSMYSAGYEKQKGRLNATLLKNGSSLYITAVQPEDSATYFCAVD</sequence>
<organism>
    <name type="scientific">Homo sapiens</name>
    <name type="common">Human</name>
    <dbReference type="NCBI Taxonomy" id="9606"/>
    <lineage>
        <taxon>Eukaryota</taxon>
        <taxon>Metazoa</taxon>
        <taxon>Chordata</taxon>
        <taxon>Craniata</taxon>
        <taxon>Vertebrata</taxon>
        <taxon>Euteleostomi</taxon>
        <taxon>Mammalia</taxon>
        <taxon>Eutheria</taxon>
        <taxon>Euarchontoglires</taxon>
        <taxon>Primates</taxon>
        <taxon>Haplorrhini</taxon>
        <taxon>Catarrhini</taxon>
        <taxon>Hominidae</taxon>
        <taxon>Homo</taxon>
    </lineage>
</organism>
<name>TVA7_HUMAN</name>
<keyword id="KW-1064">Adaptive immunity</keyword>
<keyword id="KW-1003">Cell membrane</keyword>
<keyword id="KW-1015">Disulfide bond</keyword>
<keyword id="KW-0325">Glycoprotein</keyword>
<keyword id="KW-0391">Immunity</keyword>
<keyword id="KW-0393">Immunoglobulin domain</keyword>
<keyword id="KW-0472">Membrane</keyword>
<keyword id="KW-0675">Receptor</keyword>
<keyword id="KW-1185">Reference proteome</keyword>
<keyword id="KW-0732">Signal</keyword>
<keyword id="KW-1279">T cell receptor</keyword>
<reference key="1">
    <citation type="journal article" date="2003" name="Nature">
        <title>The DNA sequence and analysis of human chromosome 14.</title>
        <authorList>
            <person name="Heilig R."/>
            <person name="Eckenberg R."/>
            <person name="Petit J.-L."/>
            <person name="Fonknechten N."/>
            <person name="Da Silva C."/>
            <person name="Cattolico L."/>
            <person name="Levy M."/>
            <person name="Barbe V."/>
            <person name="De Berardinis V."/>
            <person name="Ureta-Vidal A."/>
            <person name="Pelletier E."/>
            <person name="Vico V."/>
            <person name="Anthouard V."/>
            <person name="Rowen L."/>
            <person name="Madan A."/>
            <person name="Qin S."/>
            <person name="Sun H."/>
            <person name="Du H."/>
            <person name="Pepin K."/>
            <person name="Artiguenave F."/>
            <person name="Robert C."/>
            <person name="Cruaud C."/>
            <person name="Bruels T."/>
            <person name="Jaillon O."/>
            <person name="Friedlander L."/>
            <person name="Samson G."/>
            <person name="Brottier P."/>
            <person name="Cure S."/>
            <person name="Segurens B."/>
            <person name="Aniere F."/>
            <person name="Samain S."/>
            <person name="Crespeau H."/>
            <person name="Abbasi N."/>
            <person name="Aiach N."/>
            <person name="Boscus D."/>
            <person name="Dickhoff R."/>
            <person name="Dors M."/>
            <person name="Dubois I."/>
            <person name="Friedman C."/>
            <person name="Gouyvenoux M."/>
            <person name="James R."/>
            <person name="Madan A."/>
            <person name="Mairey-Estrada B."/>
            <person name="Mangenot S."/>
            <person name="Martins N."/>
            <person name="Menard M."/>
            <person name="Oztas S."/>
            <person name="Ratcliffe A."/>
            <person name="Shaffer T."/>
            <person name="Trask B."/>
            <person name="Vacherie B."/>
            <person name="Bellemere C."/>
            <person name="Belser C."/>
            <person name="Besnard-Gonnet M."/>
            <person name="Bartol-Mavel D."/>
            <person name="Boutard M."/>
            <person name="Briez-Silla S."/>
            <person name="Combette S."/>
            <person name="Dufosse-Laurent V."/>
            <person name="Ferron C."/>
            <person name="Lechaplais C."/>
            <person name="Louesse C."/>
            <person name="Muselet D."/>
            <person name="Magdelenat G."/>
            <person name="Pateau E."/>
            <person name="Petit E."/>
            <person name="Sirvain-Trukniewicz P."/>
            <person name="Trybou A."/>
            <person name="Vega-Czarny N."/>
            <person name="Bataille E."/>
            <person name="Bluet E."/>
            <person name="Bordelais I."/>
            <person name="Dubois M."/>
            <person name="Dumont C."/>
            <person name="Guerin T."/>
            <person name="Haffray S."/>
            <person name="Hammadi R."/>
            <person name="Muanga J."/>
            <person name="Pellouin V."/>
            <person name="Robert D."/>
            <person name="Wunderle E."/>
            <person name="Gauguet G."/>
            <person name="Roy A."/>
            <person name="Sainte-Marthe L."/>
            <person name="Verdier J."/>
            <person name="Verdier-Discala C."/>
            <person name="Hillier L.W."/>
            <person name="Fulton L."/>
            <person name="McPherson J."/>
            <person name="Matsuda F."/>
            <person name="Wilson R."/>
            <person name="Scarpelli C."/>
            <person name="Gyapay G."/>
            <person name="Wincker P."/>
            <person name="Saurin W."/>
            <person name="Quetier F."/>
            <person name="Waterston R."/>
            <person name="Hood L."/>
            <person name="Weissenbach J."/>
        </authorList>
    </citation>
    <scope>NUCLEOTIDE SEQUENCE [LARGE SCALE GENOMIC DNA] (IMGT ALLELE TRAV7*01)</scope>
</reference>
<reference key="2">
    <citation type="book" date="2001" name="The T Cell Receptor FactsBook.">
        <title>The T Cell Receptor FactsBook.</title>
        <editorList>
            <person name="Lefranc M.P."/>
            <person name="Lefranc G."/>
        </editorList>
        <authorList>
            <person name="Lefranc M.P."/>
            <person name="Lefranc G."/>
        </authorList>
    </citation>
    <scope>NOMENCLATURE</scope>
</reference>
<reference key="3">
    <citation type="journal article" date="2004" name="Nat. Rev. Immunol.">
        <title>The many important facets of T-cell repertoire diversity.</title>
        <authorList>
            <person name="Nikolich-Zugich J."/>
            <person name="Slifka M.K."/>
            <person name="Messaoudi I."/>
        </authorList>
    </citation>
    <scope>REVIEW ON T CELL REPERTOIRE DIVERSITY</scope>
</reference>
<reference key="4">
    <citation type="journal article" date="2010" name="Cold Spring Harb. Perspect. Biol.">
        <title>Structural biology of the T-cell receptor: insights into receptor assembly, ligand recognition, and initiation of signaling.</title>
        <authorList>
            <person name="Wucherpfennig K.W."/>
            <person name="Gagnon E."/>
            <person name="Call M.J."/>
            <person name="Huseby E.S."/>
            <person name="Call M.E."/>
        </authorList>
    </citation>
    <scope>REVIEW ON T CELL RECEPTOR-CD3 COMPLEX ASSEMBLY</scope>
    <scope>SUBCELLULAR LOCATION</scope>
</reference>
<reference key="5">
    <citation type="journal article" date="2013" name="Nat. Rev. Immunol.">
        <title>T cell receptor signalling networks: branched, diversified and bounded.</title>
        <authorList>
            <person name="Brownlie R.J."/>
            <person name="Zamoyska R."/>
        </authorList>
    </citation>
    <scope>REVIEW ON T CELL RECEPTOR SIGNALING</scope>
</reference>
<reference key="6">
    <citation type="journal article" date="2014" name="Front. Immunol.">
        <title>Immunoglobulin and T Cell Receptor Genes: IMGT((R)) and the Birth and Rise of Immunoinformatics.</title>
        <authorList>
            <person name="Lefranc M.P."/>
        </authorList>
    </citation>
    <scope>NOMENCLATURE</scope>
</reference>
<reference key="7">
    <citation type="journal article" date="2015" name="Annu. Rev. Immunol.">
        <title>T cell antigen receptor recognition of antigen-presenting molecules.</title>
        <authorList>
            <person name="Rossjohn J."/>
            <person name="Gras S."/>
            <person name="Miles J.J."/>
            <person name="Turner S.J."/>
            <person name="Godfrey D.I."/>
            <person name="McCluskey J."/>
        </authorList>
    </citation>
    <scope>REVIEW ON FUNCTION</scope>
</reference>
<dbReference type="EMBL" id="AC243980">
    <property type="status" value="NOT_ANNOTATED_CDS"/>
    <property type="molecule type" value="Genomic_DNA"/>
</dbReference>
<dbReference type="SMR" id="A0A075B6U4"/>
<dbReference type="FunCoup" id="A0A075B6U4">
    <property type="interactions" value="300"/>
</dbReference>
<dbReference type="IMGT_GENE-DB" id="TRAV7"/>
<dbReference type="GlyCosmos" id="A0A075B6U4">
    <property type="glycosylation" value="2 sites, No reported glycans"/>
</dbReference>
<dbReference type="GlyGen" id="A0A075B6U4">
    <property type="glycosylation" value="2 sites"/>
</dbReference>
<dbReference type="BioMuta" id="TRAV7"/>
<dbReference type="Ensembl" id="ENST00000390429.3">
    <property type="protein sequence ID" value="ENSP00000443297.1"/>
    <property type="gene ID" value="ENSG00000211781.3"/>
</dbReference>
<dbReference type="UCSC" id="uc058zdo.1">
    <property type="organism name" value="human"/>
</dbReference>
<dbReference type="AGR" id="HGNC:12145"/>
<dbReference type="GeneCards" id="TRAV7"/>
<dbReference type="HGNC" id="HGNC:12145">
    <property type="gene designation" value="TRAV7"/>
</dbReference>
<dbReference type="HPA" id="ENSG00000211781">
    <property type="expression patterns" value="Not detected"/>
</dbReference>
<dbReference type="neXtProt" id="NX_A0A075B6U4"/>
<dbReference type="VEuPathDB" id="HostDB:ENSG00000211781"/>
<dbReference type="GeneTree" id="ENSGT00940000160183"/>
<dbReference type="HOGENOM" id="CLU_077975_8_3_1"/>
<dbReference type="InParanoid" id="A0A075B6U4"/>
<dbReference type="OMA" id="GWANGEN"/>
<dbReference type="OrthoDB" id="9805246at2759"/>
<dbReference type="PAN-GO" id="A0A075B6U4">
    <property type="GO annotations" value="1 GO annotation based on evolutionary models"/>
</dbReference>
<dbReference type="PhylomeDB" id="A0A075B6U4"/>
<dbReference type="SignaLink" id="A0A075B6U4"/>
<dbReference type="Pharos" id="A0A075B6U4">
    <property type="development level" value="Tdark"/>
</dbReference>
<dbReference type="PRO" id="PR:A0A075B6U4"/>
<dbReference type="Proteomes" id="UP000005640">
    <property type="component" value="Chromosome 14"/>
</dbReference>
<dbReference type="RNAct" id="A0A075B6U4">
    <property type="molecule type" value="protein"/>
</dbReference>
<dbReference type="Bgee" id="ENSG00000211781">
    <property type="expression patterns" value="Expressed in male germ line stem cell (sensu Vertebrata) in testis and 8 other cell types or tissues"/>
</dbReference>
<dbReference type="GO" id="GO:0042101">
    <property type="term" value="C:T cell receptor complex"/>
    <property type="evidence" value="ECO:0007669"/>
    <property type="project" value="UniProtKB-KW"/>
</dbReference>
<dbReference type="GO" id="GO:0002250">
    <property type="term" value="P:adaptive immune response"/>
    <property type="evidence" value="ECO:0007669"/>
    <property type="project" value="UniProtKB-KW"/>
</dbReference>
<dbReference type="GO" id="GO:0009617">
    <property type="term" value="P:response to bacterium"/>
    <property type="evidence" value="ECO:0000318"/>
    <property type="project" value="GO_Central"/>
</dbReference>
<dbReference type="Gene3D" id="2.60.40.10">
    <property type="entry name" value="Immunoglobulins"/>
    <property type="match status" value="1"/>
</dbReference>
<dbReference type="InterPro" id="IPR007110">
    <property type="entry name" value="Ig-like_dom"/>
</dbReference>
<dbReference type="InterPro" id="IPR036179">
    <property type="entry name" value="Ig-like_dom_sf"/>
</dbReference>
<dbReference type="InterPro" id="IPR013783">
    <property type="entry name" value="Ig-like_fold"/>
</dbReference>
<dbReference type="InterPro" id="IPR013106">
    <property type="entry name" value="Ig_V-set"/>
</dbReference>
<dbReference type="InterPro" id="IPR051896">
    <property type="entry name" value="TCR_alpha_variable"/>
</dbReference>
<dbReference type="PANTHER" id="PTHR19339:SF5">
    <property type="entry name" value="IG-LIKE DOMAIN-CONTAINING PROTEIN"/>
    <property type="match status" value="1"/>
</dbReference>
<dbReference type="PANTHER" id="PTHR19339">
    <property type="entry name" value="T CELL RECEPTOR ALPHA VARIABLE 39"/>
    <property type="match status" value="1"/>
</dbReference>
<dbReference type="Pfam" id="PF07686">
    <property type="entry name" value="V-set"/>
    <property type="match status" value="1"/>
</dbReference>
<dbReference type="SMART" id="SM00406">
    <property type="entry name" value="IGv"/>
    <property type="match status" value="1"/>
</dbReference>
<dbReference type="SUPFAM" id="SSF48726">
    <property type="entry name" value="Immunoglobulin"/>
    <property type="match status" value="1"/>
</dbReference>
<dbReference type="PROSITE" id="PS50835">
    <property type="entry name" value="IG_LIKE"/>
    <property type="match status" value="1"/>
</dbReference>
<proteinExistence type="inferred from homology"/>
<comment type="function">
    <text evidence="3 5 6 7">V region of the variable domain of T cell receptor (TR) alpha chain that participates in the antigen recognition (PubMed:24600447). Alpha-beta T cell receptors are antigen specific receptors which are essential to the immune response and are present on the cell surface of T lymphocytes. Recognize peptide-major histocompatibility (MH) (pMH) complexes that are displayed by antigen presenting cells (APC), a prerequisite for efficient T cell adaptive immunity against pathogens (PubMed:25493333). Binding of alpha-beta TR to pMH complex initiates TR-CD3 clustering on the cell surface and intracellular activation of LCK that phosphorylates the ITAM motifs of CD3G, CD3D, CD3E and CD247 enabling the recruitment of ZAP70. In turn ZAP70 phosphorylates LAT, which recruits numerous signaling molecules to form the LAT signalosome. The LAT signalosome propagates signal branching to three major signaling pathways, the calcium, the mitogen-activated protein kinase (MAPK) kinase and the nuclear factor NF-kappa-B (NF-kB) pathways, leading to the mobilization of transcription factors that are critical for gene expression and essential for T cell growth and differentiation (PubMed:23524462). The T cell repertoire is generated in the thymus, by V-(D)-J rearrangement. This repertoire is then shaped by intrathymic selection events to generate a peripheral T cell pool of self-MH restricted, non-autoaggressive T cells. Post-thymic interaction of alpha-beta TR with the pMH complexes shapes TR structural and functional avidity (PubMed:15040585).</text>
</comment>
<comment type="subunit">
    <text evidence="4">Alpha-beta TR is a heterodimer composed of an alpha and beta chain; disulfide-linked. The alpha-beta TR is associated with the transmembrane signaling CD3 coreceptor proteins to form the TR-CD3 (TcR or TCR). The assembly of alpha-beta TR heterodimers with CD3 occurs in the endoplasmic reticulum where a single alpha-beta TR heterodimer associates with one CD3D-CD3E heterodimer, one CD3G-CD3E heterodimer and one CD247 homodimer forming a stable octameric structure. CD3D-CD3E and CD3G-CD3E heterodimers preferentially associate with TR alpha and TR beta chains, respectively. The association of the CD247 homodimer is the last step of TcR assembly in the endoplasmic reticulum and is required for transport to the cell surface.</text>
</comment>
<comment type="subcellular location">
    <subcellularLocation>
        <location evidence="4">Cell membrane</location>
    </subcellularLocation>
</comment>
<comment type="polymorphism">
    <text evidence="9">There are several alleles. The sequence shown is that of IMGT allele TRAV7*01.</text>
</comment>
<accession>A0A075B6U4</accession>
<feature type="signal peptide" evidence="1">
    <location>
        <begin position="1"/>
        <end position="21"/>
    </location>
</feature>
<feature type="chain" id="PRO_0000443256" description="T cell receptor alpha variable 7" evidence="1">
    <location>
        <begin position="22"/>
        <end position="112"/>
    </location>
</feature>
<feature type="domain" description="Ig-like" evidence="2">
    <location>
        <begin position="22"/>
        <end position="112" status="greater than"/>
    </location>
</feature>
<feature type="glycosylation site" description="N-linked (GlcNAc...) asparagine" evidence="1">
    <location>
        <position position="84"/>
    </location>
</feature>
<feature type="glycosylation site" description="N-linked (GlcNAc...) asparagine" evidence="1">
    <location>
        <position position="90"/>
    </location>
</feature>
<feature type="disulfide bond" evidence="2">
    <location>
        <begin position="44"/>
        <end position="109"/>
    </location>
</feature>
<feature type="non-terminal residue">
    <location>
        <position position="112"/>
    </location>
</feature>